<name>RS13_RHIE6</name>
<feature type="chain" id="PRO_1000141306" description="Small ribosomal subunit protein uS13">
    <location>
        <begin position="1"/>
        <end position="122"/>
    </location>
</feature>
<feature type="region of interest" description="Disordered" evidence="2">
    <location>
        <begin position="99"/>
        <end position="122"/>
    </location>
</feature>
<protein>
    <recommendedName>
        <fullName evidence="1">Small ribosomal subunit protein uS13</fullName>
    </recommendedName>
    <alternativeName>
        <fullName evidence="3">30S ribosomal protein S13</fullName>
    </alternativeName>
</protein>
<keyword id="KW-0687">Ribonucleoprotein</keyword>
<keyword id="KW-0689">Ribosomal protein</keyword>
<keyword id="KW-0694">RNA-binding</keyword>
<keyword id="KW-0699">rRNA-binding</keyword>
<keyword id="KW-0820">tRNA-binding</keyword>
<dbReference type="EMBL" id="CP001074">
    <property type="protein sequence ID" value="ACE90741.1"/>
    <property type="molecule type" value="Genomic_DNA"/>
</dbReference>
<dbReference type="SMR" id="B3PWU3"/>
<dbReference type="KEGG" id="rec:RHECIAT_CH0001771"/>
<dbReference type="eggNOG" id="COG0099">
    <property type="taxonomic scope" value="Bacteria"/>
</dbReference>
<dbReference type="HOGENOM" id="CLU_103849_1_2_5"/>
<dbReference type="Proteomes" id="UP000008817">
    <property type="component" value="Chromosome"/>
</dbReference>
<dbReference type="GO" id="GO:0005829">
    <property type="term" value="C:cytosol"/>
    <property type="evidence" value="ECO:0007669"/>
    <property type="project" value="TreeGrafter"/>
</dbReference>
<dbReference type="GO" id="GO:0015935">
    <property type="term" value="C:small ribosomal subunit"/>
    <property type="evidence" value="ECO:0007669"/>
    <property type="project" value="TreeGrafter"/>
</dbReference>
<dbReference type="GO" id="GO:0019843">
    <property type="term" value="F:rRNA binding"/>
    <property type="evidence" value="ECO:0007669"/>
    <property type="project" value="UniProtKB-UniRule"/>
</dbReference>
<dbReference type="GO" id="GO:0003735">
    <property type="term" value="F:structural constituent of ribosome"/>
    <property type="evidence" value="ECO:0007669"/>
    <property type="project" value="InterPro"/>
</dbReference>
<dbReference type="GO" id="GO:0000049">
    <property type="term" value="F:tRNA binding"/>
    <property type="evidence" value="ECO:0007669"/>
    <property type="project" value="UniProtKB-UniRule"/>
</dbReference>
<dbReference type="GO" id="GO:0006412">
    <property type="term" value="P:translation"/>
    <property type="evidence" value="ECO:0007669"/>
    <property type="project" value="UniProtKB-UniRule"/>
</dbReference>
<dbReference type="FunFam" id="1.10.8.50:FF:000001">
    <property type="entry name" value="30S ribosomal protein S13"/>
    <property type="match status" value="1"/>
</dbReference>
<dbReference type="FunFam" id="4.10.910.10:FF:000001">
    <property type="entry name" value="30S ribosomal protein S13"/>
    <property type="match status" value="1"/>
</dbReference>
<dbReference type="Gene3D" id="1.10.8.50">
    <property type="match status" value="1"/>
</dbReference>
<dbReference type="Gene3D" id="4.10.910.10">
    <property type="entry name" value="30s ribosomal protein s13, domain 2"/>
    <property type="match status" value="1"/>
</dbReference>
<dbReference type="HAMAP" id="MF_01315">
    <property type="entry name" value="Ribosomal_uS13"/>
    <property type="match status" value="1"/>
</dbReference>
<dbReference type="InterPro" id="IPR027437">
    <property type="entry name" value="Rbsml_uS13_C"/>
</dbReference>
<dbReference type="InterPro" id="IPR001892">
    <property type="entry name" value="Ribosomal_uS13"/>
</dbReference>
<dbReference type="InterPro" id="IPR010979">
    <property type="entry name" value="Ribosomal_uS13-like_H2TH"/>
</dbReference>
<dbReference type="InterPro" id="IPR019980">
    <property type="entry name" value="Ribosomal_uS13_bac-type"/>
</dbReference>
<dbReference type="InterPro" id="IPR018269">
    <property type="entry name" value="Ribosomal_uS13_CS"/>
</dbReference>
<dbReference type="NCBIfam" id="TIGR03631">
    <property type="entry name" value="uS13_bact"/>
    <property type="match status" value="1"/>
</dbReference>
<dbReference type="PANTHER" id="PTHR10871">
    <property type="entry name" value="30S RIBOSOMAL PROTEIN S13/40S RIBOSOMAL PROTEIN S18"/>
    <property type="match status" value="1"/>
</dbReference>
<dbReference type="PANTHER" id="PTHR10871:SF1">
    <property type="entry name" value="SMALL RIBOSOMAL SUBUNIT PROTEIN US13M"/>
    <property type="match status" value="1"/>
</dbReference>
<dbReference type="Pfam" id="PF00416">
    <property type="entry name" value="Ribosomal_S13"/>
    <property type="match status" value="1"/>
</dbReference>
<dbReference type="PIRSF" id="PIRSF002134">
    <property type="entry name" value="Ribosomal_S13"/>
    <property type="match status" value="1"/>
</dbReference>
<dbReference type="SUPFAM" id="SSF46946">
    <property type="entry name" value="S13-like H2TH domain"/>
    <property type="match status" value="1"/>
</dbReference>
<dbReference type="PROSITE" id="PS00646">
    <property type="entry name" value="RIBOSOMAL_S13_1"/>
    <property type="match status" value="1"/>
</dbReference>
<dbReference type="PROSITE" id="PS50159">
    <property type="entry name" value="RIBOSOMAL_S13_2"/>
    <property type="match status" value="1"/>
</dbReference>
<gene>
    <name evidence="1" type="primary">rpsM</name>
    <name type="ordered locus">RHECIAT_CH0001771</name>
</gene>
<comment type="function">
    <text evidence="1">Located at the top of the head of the 30S subunit, it contacts several helices of the 16S rRNA. In the 70S ribosome it contacts the 23S rRNA (bridge B1a) and protein L5 of the 50S subunit (bridge B1b), connecting the 2 subunits; these bridges are implicated in subunit movement. Contacts the tRNAs in the A and P-sites.</text>
</comment>
<comment type="subunit">
    <text evidence="1">Part of the 30S ribosomal subunit. Forms a loose heterodimer with protein S19. Forms two bridges to the 50S subunit in the 70S ribosome.</text>
</comment>
<comment type="similarity">
    <text evidence="1">Belongs to the universal ribosomal protein uS13 family.</text>
</comment>
<organism>
    <name type="scientific">Rhizobium etli (strain CIAT 652)</name>
    <dbReference type="NCBI Taxonomy" id="491916"/>
    <lineage>
        <taxon>Bacteria</taxon>
        <taxon>Pseudomonadati</taxon>
        <taxon>Pseudomonadota</taxon>
        <taxon>Alphaproteobacteria</taxon>
        <taxon>Hyphomicrobiales</taxon>
        <taxon>Rhizobiaceae</taxon>
        <taxon>Rhizobium/Agrobacterium group</taxon>
        <taxon>Rhizobium</taxon>
    </lineage>
</organism>
<evidence type="ECO:0000255" key="1">
    <source>
        <dbReference type="HAMAP-Rule" id="MF_01315"/>
    </source>
</evidence>
<evidence type="ECO:0000256" key="2">
    <source>
        <dbReference type="SAM" id="MobiDB-lite"/>
    </source>
</evidence>
<evidence type="ECO:0000305" key="3"/>
<accession>B3PWU3</accession>
<proteinExistence type="inferred from homology"/>
<reference key="1">
    <citation type="journal article" date="2010" name="Appl. Environ. Microbiol.">
        <title>Conserved symbiotic plasmid DNA sequences in the multireplicon pangenomic structure of Rhizobium etli.</title>
        <authorList>
            <person name="Gonzalez V."/>
            <person name="Acosta J.L."/>
            <person name="Santamaria R.I."/>
            <person name="Bustos P."/>
            <person name="Fernandez J.L."/>
            <person name="Hernandez Gonzalez I.L."/>
            <person name="Diaz R."/>
            <person name="Flores M."/>
            <person name="Palacios R."/>
            <person name="Mora J."/>
            <person name="Davila G."/>
        </authorList>
    </citation>
    <scope>NUCLEOTIDE SEQUENCE [LARGE SCALE GENOMIC DNA]</scope>
    <source>
        <strain>CIAT 652</strain>
    </source>
</reference>
<sequence length="122" mass="13758">MARIAGVNIPTAKRVVIALTYIHGIGPKFAQEIVEKVGIPAERRVHQLTDAEVLQIREAIDRDYQVEGDLRRETAMNIKRLMDLGCYRGLRHRRGLPVRGQRTHTNARTRKGPAKAIAGKKK</sequence>